<comment type="function">
    <text evidence="1">Part of the ABC transporter complex MalEFGK involved in maltose/maltodextrin import. Probably responsible for the translocation of the substrate across the membrane.</text>
</comment>
<comment type="subunit">
    <text evidence="1">The complex is composed of two ATP-binding proteins (MalK), two transmembrane proteins (MalG and MalF) and a solute-binding protein (MalE).</text>
</comment>
<comment type="subcellular location">
    <subcellularLocation>
        <location evidence="1">Cell inner membrane</location>
        <topology evidence="1">Multi-pass membrane protein</topology>
    </subcellularLocation>
</comment>
<comment type="similarity">
    <text evidence="4">Belongs to the binding-protein-dependent transport system permease family. MalFG subfamily.</text>
</comment>
<comment type="sequence caution" evidence="4">
    <conflict type="erroneous initiation">
        <sequence resource="EMBL-CDS" id="AAF70321"/>
    </conflict>
</comment>
<dbReference type="EMBL" id="AE003853">
    <property type="protein sequence ID" value="AAF96840.1"/>
    <property type="molecule type" value="Genomic_DNA"/>
</dbReference>
<dbReference type="EMBL" id="AF260245">
    <property type="protein sequence ID" value="AAF70321.1"/>
    <property type="status" value="ALT_INIT"/>
    <property type="molecule type" value="Genomic_DNA"/>
</dbReference>
<dbReference type="PIR" id="G82397">
    <property type="entry name" value="G82397"/>
</dbReference>
<dbReference type="RefSeq" id="NP_233328.1">
    <property type="nucleotide sequence ID" value="NC_002506.1"/>
</dbReference>
<dbReference type="RefSeq" id="WP_010895488.1">
    <property type="nucleotide sequence ID" value="NC_002506.1"/>
</dbReference>
<dbReference type="SMR" id="Q9KL06"/>
<dbReference type="STRING" id="243277.VC_A0944"/>
<dbReference type="DNASU" id="2612560"/>
<dbReference type="EnsemblBacteria" id="AAF96840">
    <property type="protein sequence ID" value="AAF96840"/>
    <property type="gene ID" value="VC_A0944"/>
</dbReference>
<dbReference type="KEGG" id="vch:VC_A0944"/>
<dbReference type="PATRIC" id="fig|243277.26.peg.3556"/>
<dbReference type="eggNOG" id="COG1175">
    <property type="taxonomic scope" value="Bacteria"/>
</dbReference>
<dbReference type="HOGENOM" id="CLU_016047_20_0_6"/>
<dbReference type="Proteomes" id="UP000000584">
    <property type="component" value="Chromosome 2"/>
</dbReference>
<dbReference type="GO" id="GO:1990060">
    <property type="term" value="C:maltose transport complex"/>
    <property type="evidence" value="ECO:0000318"/>
    <property type="project" value="GO_Central"/>
</dbReference>
<dbReference type="GO" id="GO:0015423">
    <property type="term" value="F:ABC-type maltose transporter activity"/>
    <property type="evidence" value="ECO:0000318"/>
    <property type="project" value="GO_Central"/>
</dbReference>
<dbReference type="GO" id="GO:0042956">
    <property type="term" value="P:maltodextrin transmembrane transport"/>
    <property type="evidence" value="ECO:0000318"/>
    <property type="project" value="GO_Central"/>
</dbReference>
<dbReference type="CDD" id="cd06261">
    <property type="entry name" value="TM_PBP2"/>
    <property type="match status" value="1"/>
</dbReference>
<dbReference type="FunFam" id="1.10.3720.10:FF:000030">
    <property type="entry name" value="Maltose ABC transporter permease MalF"/>
    <property type="match status" value="1"/>
</dbReference>
<dbReference type="Gene3D" id="2.40.430.10">
    <property type="entry name" value="D-maltodextrin-binding protein, MBP"/>
    <property type="match status" value="1"/>
</dbReference>
<dbReference type="Gene3D" id="1.20.58.370">
    <property type="entry name" value="MalF N-terminal region-like"/>
    <property type="match status" value="1"/>
</dbReference>
<dbReference type="Gene3D" id="3.10.650.10">
    <property type="entry name" value="MalF N-terminal region-like"/>
    <property type="match status" value="1"/>
</dbReference>
<dbReference type="Gene3D" id="1.10.3720.10">
    <property type="entry name" value="MetI-like"/>
    <property type="match status" value="1"/>
</dbReference>
<dbReference type="InterPro" id="IPR035277">
    <property type="entry name" value="MalF_N"/>
</dbReference>
<dbReference type="InterPro" id="IPR048464">
    <property type="entry name" value="MalF_N_TM"/>
</dbReference>
<dbReference type="InterPro" id="IPR029345">
    <property type="entry name" value="MalF_P2"/>
</dbReference>
<dbReference type="InterPro" id="IPR047103">
    <property type="entry name" value="MalF_P2_sf"/>
</dbReference>
<dbReference type="InterPro" id="IPR000515">
    <property type="entry name" value="MetI-like"/>
</dbReference>
<dbReference type="InterPro" id="IPR035906">
    <property type="entry name" value="MetI-like_sf"/>
</dbReference>
<dbReference type="NCBIfam" id="NF008232">
    <property type="entry name" value="PRK10999.1"/>
    <property type="match status" value="1"/>
</dbReference>
<dbReference type="PANTHER" id="PTHR47314">
    <property type="entry name" value="MALTOSE/MALTODEXTRIN TRANSPORT SYSTEM PERMEASE PROTEIN MALF"/>
    <property type="match status" value="1"/>
</dbReference>
<dbReference type="PANTHER" id="PTHR47314:SF1">
    <property type="entry name" value="MALTOSE_MALTODEXTRIN TRANSPORT SYSTEM PERMEASE PROTEIN MALF"/>
    <property type="match status" value="1"/>
</dbReference>
<dbReference type="Pfam" id="PF00528">
    <property type="entry name" value="BPD_transp_1"/>
    <property type="match status" value="1"/>
</dbReference>
<dbReference type="Pfam" id="PF20872">
    <property type="entry name" value="MalF_N_TM"/>
    <property type="match status" value="1"/>
</dbReference>
<dbReference type="Pfam" id="PF14785">
    <property type="entry name" value="MalF_P2"/>
    <property type="match status" value="1"/>
</dbReference>
<dbReference type="SUPFAM" id="SSF160964">
    <property type="entry name" value="MalF N-terminal region-like"/>
    <property type="match status" value="1"/>
</dbReference>
<dbReference type="SUPFAM" id="SSF161098">
    <property type="entry name" value="MetI-like"/>
    <property type="match status" value="1"/>
</dbReference>
<dbReference type="PROSITE" id="PS50928">
    <property type="entry name" value="ABC_TM1"/>
    <property type="match status" value="1"/>
</dbReference>
<organism>
    <name type="scientific">Vibrio cholerae serotype O1 (strain ATCC 39315 / El Tor Inaba N16961)</name>
    <dbReference type="NCBI Taxonomy" id="243277"/>
    <lineage>
        <taxon>Bacteria</taxon>
        <taxon>Pseudomonadati</taxon>
        <taxon>Pseudomonadota</taxon>
        <taxon>Gammaproteobacteria</taxon>
        <taxon>Vibrionales</taxon>
        <taxon>Vibrionaceae</taxon>
        <taxon>Vibrio</taxon>
    </lineage>
</organism>
<keyword id="KW-0997">Cell inner membrane</keyword>
<keyword id="KW-1003">Cell membrane</keyword>
<keyword id="KW-0472">Membrane</keyword>
<keyword id="KW-1185">Reference proteome</keyword>
<keyword id="KW-0762">Sugar transport</keyword>
<keyword id="KW-0812">Transmembrane</keyword>
<keyword id="KW-1133">Transmembrane helix</keyword>
<keyword id="KW-0813">Transport</keyword>
<accession>Q9KL06</accession>
<accession>Q9L527</accession>
<protein>
    <recommendedName>
        <fullName evidence="1">Maltose/maltodextrin transport system permease protein MalF</fullName>
    </recommendedName>
</protein>
<name>MALF_VIBCH</name>
<reference key="1">
    <citation type="journal article" date="2000" name="Nature">
        <title>DNA sequence of both chromosomes of the cholera pathogen Vibrio cholerae.</title>
        <authorList>
            <person name="Heidelberg J.F."/>
            <person name="Eisen J.A."/>
            <person name="Nelson W.C."/>
            <person name="Clayton R.A."/>
            <person name="Gwinn M.L."/>
            <person name="Dodson R.J."/>
            <person name="Haft D.H."/>
            <person name="Hickey E.K."/>
            <person name="Peterson J.D."/>
            <person name="Umayam L.A."/>
            <person name="Gill S.R."/>
            <person name="Nelson K.E."/>
            <person name="Read T.D."/>
            <person name="Tettelin H."/>
            <person name="Richardson D.L."/>
            <person name="Ermolaeva M.D."/>
            <person name="Vamathevan J.J."/>
            <person name="Bass S."/>
            <person name="Qin H."/>
            <person name="Dragoi I."/>
            <person name="Sellers P."/>
            <person name="McDonald L.A."/>
            <person name="Utterback T.R."/>
            <person name="Fleischmann R.D."/>
            <person name="Nierman W.C."/>
            <person name="White O."/>
            <person name="Salzberg S.L."/>
            <person name="Smith H.O."/>
            <person name="Colwell R.R."/>
            <person name="Mekalanos J.J."/>
            <person name="Venter J.C."/>
            <person name="Fraser C.M."/>
        </authorList>
    </citation>
    <scope>NUCLEOTIDE SEQUENCE [LARGE SCALE GENOMIC DNA]</scope>
    <source>
        <strain>ATCC 39315 / El Tor Inaba N16961</strain>
    </source>
</reference>
<reference key="2">
    <citation type="submission" date="2000-04" db="EMBL/GenBank/DDBJ databases">
        <authorList>
            <person name="Dutta P.P."/>
            <person name="Roychoudhury S."/>
            <person name="Chaudhuri K."/>
        </authorList>
    </citation>
    <scope>NUCLEOTIDE SEQUENCE [GENOMIC DNA] OF 232-524</scope>
    <source>
        <strain>ATCC 25870 / Classical Inaba 569B / Serotype O1</strain>
    </source>
</reference>
<feature type="chain" id="PRO_0000060076" description="Maltose/maltodextrin transport system permease protein MalF">
    <location>
        <begin position="1"/>
        <end position="524"/>
    </location>
</feature>
<feature type="topological domain" description="Cytoplasmic" evidence="2">
    <location>
        <begin position="1"/>
        <end position="22"/>
    </location>
</feature>
<feature type="transmembrane region" description="Helical" evidence="3">
    <location>
        <begin position="23"/>
        <end position="45"/>
    </location>
</feature>
<feature type="topological domain" description="Periplasmic" evidence="2">
    <location>
        <begin position="46"/>
        <end position="49"/>
    </location>
</feature>
<feature type="transmembrane region" description="Helical" evidence="3">
    <location>
        <begin position="50"/>
        <end position="69"/>
    </location>
</feature>
<feature type="topological domain" description="Cytoplasmic" evidence="2">
    <location>
        <begin position="70"/>
        <end position="81"/>
    </location>
</feature>
<feature type="transmembrane region" description="Helical" evidence="3">
    <location>
        <begin position="82"/>
        <end position="104"/>
    </location>
</feature>
<feature type="topological domain" description="Periplasmic" evidence="2">
    <location>
        <begin position="105"/>
        <end position="289"/>
    </location>
</feature>
<feature type="transmembrane region" description="Helical" evidence="3">
    <location>
        <begin position="290"/>
        <end position="312"/>
    </location>
</feature>
<feature type="topological domain" description="Cytoplasmic" evidence="2">
    <location>
        <begin position="313"/>
        <end position="324"/>
    </location>
</feature>
<feature type="transmembrane region" description="Helical" evidence="3">
    <location>
        <begin position="325"/>
        <end position="347"/>
    </location>
</feature>
<feature type="topological domain" description="Periplasmic" evidence="2">
    <location>
        <begin position="348"/>
        <end position="379"/>
    </location>
</feature>
<feature type="transmembrane region" description="Helical" evidence="3">
    <location>
        <begin position="380"/>
        <end position="402"/>
    </location>
</feature>
<feature type="topological domain" description="Cytoplasmic" evidence="2">
    <location>
        <begin position="403"/>
        <end position="435"/>
    </location>
</feature>
<feature type="transmembrane region" description="Helical" evidence="3">
    <location>
        <begin position="436"/>
        <end position="458"/>
    </location>
</feature>
<feature type="topological domain" description="Periplasmic" evidence="2">
    <location>
        <begin position="459"/>
        <end position="493"/>
    </location>
</feature>
<feature type="transmembrane region" description="Helical" evidence="3">
    <location>
        <begin position="494"/>
        <end position="516"/>
    </location>
</feature>
<feature type="topological domain" description="Cytoplasmic" evidence="2">
    <location>
        <begin position="517"/>
        <end position="524"/>
    </location>
</feature>
<feature type="domain" description="ABC transmembrane type-1" evidence="3">
    <location>
        <begin position="291"/>
        <end position="515"/>
    </location>
</feature>
<evidence type="ECO:0000250" key="1">
    <source>
        <dbReference type="UniProtKB" id="P02916"/>
    </source>
</evidence>
<evidence type="ECO:0000255" key="2"/>
<evidence type="ECO:0000255" key="3">
    <source>
        <dbReference type="PROSITE-ProRule" id="PRU00441"/>
    </source>
</evidence>
<evidence type="ECO:0000305" key="4"/>
<gene>
    <name type="primary">malF</name>
    <name type="ordered locus">VC_A0944</name>
</gene>
<proteinExistence type="inferred from homology"/>
<sequence>MQSVQGTQAMSDPTAVRPADKRAFLKWAVLGAVGIVNGYATILMYSRGEVAFALLTLILTTLALYIFGSRKTYAHRYIYPGIAGMILFILFPLAYTVGLAFTNYSAKNQLTLERAQSVLMDQTFQSGESYAFQLYKTEQGYRLLIEDGDERLATAPFSLSGNVPTDLNLEVIGGIDGEVEPIKTIIGYRTELSGIDLHFPDGEDIRMSGLRKFAAVKPLYTLQDDGETLTNNQSGQVLRPNMEIGFYQPINESGEFVGERVSPGFVVSIGTHNFERVWKDEGIKEPFINIFIWTVIFSVLTVIFTLMIGLVLASVVQWEALKGRAVYRVLLILPYAVPAFISILIFRGLFNQSFGEINMVLNGLFGLSPAWFSDPLLAKTMVLIVNTWLGFPYMMIFCMGLLKAIPDDLYEASAIDGANFIHNFTKITLPMMIKPLTPLLIASFAFNFNNFVMIQLLTQGGPNRIGTSEPAGYTDLLVSYTYRIAFEGTGGQDFGLASAIATLIFLLVGALALLNLRFTKLSQQ</sequence>